<organism>
    <name type="scientific">Mycosarcoma maydis</name>
    <name type="common">Corn smut fungus</name>
    <name type="synonym">Ustilago maydis</name>
    <dbReference type="NCBI Taxonomy" id="5270"/>
    <lineage>
        <taxon>Eukaryota</taxon>
        <taxon>Fungi</taxon>
        <taxon>Dikarya</taxon>
        <taxon>Basidiomycota</taxon>
        <taxon>Ustilaginomycotina</taxon>
        <taxon>Ustilaginomycetes</taxon>
        <taxon>Ustilaginales</taxon>
        <taxon>Ustilaginaceae</taxon>
        <taxon>Mycosarcoma</taxon>
    </lineage>
</organism>
<name>SET2_MYCMD</name>
<accession>Q4PBL3</accession>
<accession>A0A0D1CU33</accession>
<protein>
    <recommendedName>
        <fullName>Histone-lysine N-methyltransferase, H3 lysine-36 specific</fullName>
        <ecNumber evidence="2">2.1.1.359</ecNumber>
    </recommendedName>
    <alternativeName>
        <fullName>SET domain-containing protein 2</fullName>
    </alternativeName>
</protein>
<reference key="1">
    <citation type="journal article" date="2006" name="Nature">
        <title>Insights from the genome of the biotrophic fungal plant pathogen Ustilago maydis.</title>
        <authorList>
            <person name="Kaemper J."/>
            <person name="Kahmann R."/>
            <person name="Boelker M."/>
            <person name="Ma L.-J."/>
            <person name="Brefort T."/>
            <person name="Saville B.J."/>
            <person name="Banuett F."/>
            <person name="Kronstad J.W."/>
            <person name="Gold S.E."/>
            <person name="Mueller O."/>
            <person name="Perlin M.H."/>
            <person name="Woesten H.A.B."/>
            <person name="de Vries R."/>
            <person name="Ruiz-Herrera J."/>
            <person name="Reynaga-Pena C.G."/>
            <person name="Snetselaar K."/>
            <person name="McCann M."/>
            <person name="Perez-Martin J."/>
            <person name="Feldbruegge M."/>
            <person name="Basse C.W."/>
            <person name="Steinberg G."/>
            <person name="Ibeas J.I."/>
            <person name="Holloman W."/>
            <person name="Guzman P."/>
            <person name="Farman M.L."/>
            <person name="Stajich J.E."/>
            <person name="Sentandreu R."/>
            <person name="Gonzalez-Prieto J.M."/>
            <person name="Kennell J.C."/>
            <person name="Molina L."/>
            <person name="Schirawski J."/>
            <person name="Mendoza-Mendoza A."/>
            <person name="Greilinger D."/>
            <person name="Muench K."/>
            <person name="Roessel N."/>
            <person name="Scherer M."/>
            <person name="Vranes M."/>
            <person name="Ladendorf O."/>
            <person name="Vincon V."/>
            <person name="Fuchs U."/>
            <person name="Sandrock B."/>
            <person name="Meng S."/>
            <person name="Ho E.C.H."/>
            <person name="Cahill M.J."/>
            <person name="Boyce K.J."/>
            <person name="Klose J."/>
            <person name="Klosterman S.J."/>
            <person name="Deelstra H.J."/>
            <person name="Ortiz-Castellanos L."/>
            <person name="Li W."/>
            <person name="Sanchez-Alonso P."/>
            <person name="Schreier P.H."/>
            <person name="Haeuser-Hahn I."/>
            <person name="Vaupel M."/>
            <person name="Koopmann E."/>
            <person name="Friedrich G."/>
            <person name="Voss H."/>
            <person name="Schlueter T."/>
            <person name="Margolis J."/>
            <person name="Platt D."/>
            <person name="Swimmer C."/>
            <person name="Gnirke A."/>
            <person name="Chen F."/>
            <person name="Vysotskaia V."/>
            <person name="Mannhaupt G."/>
            <person name="Gueldener U."/>
            <person name="Muensterkoetter M."/>
            <person name="Haase D."/>
            <person name="Oesterheld M."/>
            <person name="Mewes H.-W."/>
            <person name="Mauceli E.W."/>
            <person name="DeCaprio D."/>
            <person name="Wade C.M."/>
            <person name="Butler J."/>
            <person name="Young S.K."/>
            <person name="Jaffe D.B."/>
            <person name="Calvo S.E."/>
            <person name="Nusbaum C."/>
            <person name="Galagan J.E."/>
            <person name="Birren B.W."/>
        </authorList>
    </citation>
    <scope>NUCLEOTIDE SEQUENCE [LARGE SCALE GENOMIC DNA]</scope>
    <source>
        <strain>DSM 14603 / FGSC 9021 / UM521</strain>
    </source>
</reference>
<reference key="2">
    <citation type="submission" date="2014-09" db="EMBL/GenBank/DDBJ databases">
        <authorList>
            <person name="Gueldener U."/>
            <person name="Muensterkoetter M."/>
            <person name="Walter M.C."/>
            <person name="Mannhaupt G."/>
            <person name="Kahmann R."/>
        </authorList>
    </citation>
    <scope>GENOME REANNOTATION</scope>
    <source>
        <strain>DSM 14603 / FGSC 9021 / UM521</strain>
    </source>
</reference>
<proteinExistence type="inferred from homology"/>
<keyword id="KW-0158">Chromosome</keyword>
<keyword id="KW-0175">Coiled coil</keyword>
<keyword id="KW-0489">Methyltransferase</keyword>
<keyword id="KW-0539">Nucleus</keyword>
<keyword id="KW-1185">Reference proteome</keyword>
<keyword id="KW-0678">Repressor</keyword>
<keyword id="KW-0949">S-adenosyl-L-methionine</keyword>
<keyword id="KW-0804">Transcription</keyword>
<keyword id="KW-0805">Transcription regulation</keyword>
<keyword id="KW-0808">Transferase</keyword>
<evidence type="ECO:0000250" key="1"/>
<evidence type="ECO:0000250" key="2">
    <source>
        <dbReference type="UniProtKB" id="P46995"/>
    </source>
</evidence>
<evidence type="ECO:0000255" key="3"/>
<evidence type="ECO:0000255" key="4">
    <source>
        <dbReference type="PROSITE-ProRule" id="PRU00155"/>
    </source>
</evidence>
<evidence type="ECO:0000255" key="5">
    <source>
        <dbReference type="PROSITE-ProRule" id="PRU00190"/>
    </source>
</evidence>
<evidence type="ECO:0000255" key="6">
    <source>
        <dbReference type="PROSITE-ProRule" id="PRU00562"/>
    </source>
</evidence>
<evidence type="ECO:0000255" key="7">
    <source>
        <dbReference type="PROSITE-ProRule" id="PRU00901"/>
    </source>
</evidence>
<evidence type="ECO:0000256" key="8">
    <source>
        <dbReference type="SAM" id="MobiDB-lite"/>
    </source>
</evidence>
<feature type="chain" id="PRO_0000269793" description="Histone-lysine N-methyltransferase, H3 lysine-36 specific">
    <location>
        <begin position="1"/>
        <end position="972"/>
    </location>
</feature>
<feature type="domain" description="AWS" evidence="6">
    <location>
        <begin position="191"/>
        <end position="244"/>
    </location>
</feature>
<feature type="domain" description="SET" evidence="5">
    <location>
        <begin position="246"/>
        <end position="363"/>
    </location>
</feature>
<feature type="domain" description="Post-SET" evidence="4">
    <location>
        <begin position="370"/>
        <end position="386"/>
    </location>
</feature>
<feature type="region of interest" description="Disordered" evidence="8">
    <location>
        <begin position="25"/>
        <end position="122"/>
    </location>
</feature>
<feature type="region of interest" description="Disordered" evidence="8">
    <location>
        <begin position="670"/>
        <end position="721"/>
    </location>
</feature>
<feature type="region of interest" description="Disordered" evidence="8">
    <location>
        <begin position="748"/>
        <end position="772"/>
    </location>
</feature>
<feature type="region of interest" description="Disordered" evidence="8">
    <location>
        <begin position="784"/>
        <end position="864"/>
    </location>
</feature>
<feature type="region of interest" description="Disordered" evidence="8">
    <location>
        <begin position="948"/>
        <end position="972"/>
    </location>
</feature>
<feature type="coiled-coil region" evidence="3">
    <location>
        <begin position="770"/>
        <end position="806"/>
    </location>
</feature>
<feature type="compositionally biased region" description="Pro residues" evidence="8">
    <location>
        <begin position="57"/>
        <end position="81"/>
    </location>
</feature>
<feature type="compositionally biased region" description="Polar residues" evidence="8">
    <location>
        <begin position="83"/>
        <end position="92"/>
    </location>
</feature>
<feature type="compositionally biased region" description="Low complexity" evidence="8">
    <location>
        <begin position="111"/>
        <end position="122"/>
    </location>
</feature>
<feature type="compositionally biased region" description="Pro residues" evidence="8">
    <location>
        <begin position="674"/>
        <end position="684"/>
    </location>
</feature>
<feature type="compositionally biased region" description="Polar residues" evidence="8">
    <location>
        <begin position="702"/>
        <end position="721"/>
    </location>
</feature>
<feature type="compositionally biased region" description="Basic and acidic residues" evidence="8">
    <location>
        <begin position="784"/>
        <end position="803"/>
    </location>
</feature>
<feature type="compositionally biased region" description="Low complexity" evidence="8">
    <location>
        <begin position="831"/>
        <end position="846"/>
    </location>
</feature>
<feature type="compositionally biased region" description="Polar residues" evidence="8">
    <location>
        <begin position="847"/>
        <end position="857"/>
    </location>
</feature>
<feature type="compositionally biased region" description="Low complexity" evidence="8">
    <location>
        <begin position="959"/>
        <end position="972"/>
    </location>
</feature>
<gene>
    <name type="primary">SET2</name>
    <name type="ORF">UMAG_02500</name>
</gene>
<sequence length="972" mass="107431">MDWDHNVTFSAVRSLQATTAVAQATDNVVDLDRNRVDSRPGVLPTKNESSPHSSASLPPPSPHPPPPPAFTPSPSPSPSPSPQTATARSSVTDAAPAPKRSPRSPLHSNGSFPPVSDPISSIDSRDALDIDHESTAMLASSSSARKSKPKLQPQLINHLPLAQQAAMATFHEITFNDYHDKKLGRPPGKFDDYMICDCTPNSGNLDMACTDYSGCINRMTQIECSASKCRWGKQCRNQRFHRRQYVDVDIVQTEKKGFGLRACQDIPKETFIYEYVGEVMNQTTFLQRMQQYRIEGIRHFYFMMLQPNEYLDATKKGGKGRFINHSCNPNCAVSKWQVGKHLRMGIFAKRNIQKGEELTFNYNVDRYGNDAQECFCGEPNCVGTLGGKTQTDLSGMDDLFLDALGISDEVEQTEAKGSRRKRGKRLDLDFIPQMRAIQEHEATRVMTAARQAGPKREILEKLLRRMEMTTDVNVQKSLVKLHGFILMQFLLEQWWNDRDIVILIINVLARWPLIARNKVIDCGVEDQVRILAQTYRPRSPEDQKPSLDALRQVKQDDSAADRNDYTQVQPTLAPVRIGAPPAPDAEVSARAEHLLEAWKKLDMTYRIARKDALKPDADDHKDATAVTTWIDRRRMQDLDDPLDLEHAQAPNAVSSELGNALSGDQELREIKPSWQPPPAPPSMPNAPAKRMGGAVHHRSPPGSFTPTRLQSSGQSPLTPDQVTSVLSSSLVKSLSGLVSSLKQQGIQLQQQQQQQPPAQQQPSAQPAAPSAKSIEDIIREANEQEERARKEAEAAAKAARELEVNGGQTSGSSRKRPSSASRHSDKRAKHSSLSSSSQAASKLISSNGSAADSTSKAGSVESVAANERRLRKLVGELVVRQMSKYKDDLERESFKRHAKELTNAIVGKEMRNPKSWPPARGALTELSLDKRAKIKAFAKEYIDKLLARKGKGKGSSTPSNNEGAGSSNNGIV</sequence>
<dbReference type="EC" id="2.1.1.359" evidence="2"/>
<dbReference type="EMBL" id="CM003144">
    <property type="protein sequence ID" value="KIS69988.1"/>
    <property type="molecule type" value="Genomic_DNA"/>
</dbReference>
<dbReference type="RefSeq" id="XP_011388777.1">
    <property type="nucleotide sequence ID" value="XM_011390475.1"/>
</dbReference>
<dbReference type="SMR" id="Q4PBL3"/>
<dbReference type="FunCoup" id="Q4PBL3">
    <property type="interactions" value="71"/>
</dbReference>
<dbReference type="STRING" id="237631.Q4PBL3"/>
<dbReference type="EnsemblFungi" id="KIS69988">
    <property type="protein sequence ID" value="KIS69988"/>
    <property type="gene ID" value="UMAG_02500"/>
</dbReference>
<dbReference type="GeneID" id="23563234"/>
<dbReference type="KEGG" id="uma:UMAG_02500"/>
<dbReference type="VEuPathDB" id="FungiDB:UMAG_02500"/>
<dbReference type="eggNOG" id="KOG4442">
    <property type="taxonomic scope" value="Eukaryota"/>
</dbReference>
<dbReference type="HOGENOM" id="CLU_008492_1_0_1"/>
<dbReference type="InParanoid" id="Q4PBL3"/>
<dbReference type="OMA" id="INVLARW"/>
<dbReference type="OrthoDB" id="422362at2759"/>
<dbReference type="Proteomes" id="UP000000561">
    <property type="component" value="Chromosome 5"/>
</dbReference>
<dbReference type="GO" id="GO:0000785">
    <property type="term" value="C:chromatin"/>
    <property type="evidence" value="ECO:0000318"/>
    <property type="project" value="GO_Central"/>
</dbReference>
<dbReference type="GO" id="GO:0005634">
    <property type="term" value="C:nucleus"/>
    <property type="evidence" value="ECO:0000318"/>
    <property type="project" value="GO_Central"/>
</dbReference>
<dbReference type="GO" id="GO:0046975">
    <property type="term" value="F:histone H3K36 methyltransferase activity"/>
    <property type="evidence" value="ECO:0000318"/>
    <property type="project" value="GO_Central"/>
</dbReference>
<dbReference type="GO" id="GO:0140955">
    <property type="term" value="F:histone H3K36 trimethyltransferase activity"/>
    <property type="evidence" value="ECO:0007669"/>
    <property type="project" value="UniProtKB-EC"/>
</dbReference>
<dbReference type="GO" id="GO:0032259">
    <property type="term" value="P:methylation"/>
    <property type="evidence" value="ECO:0007669"/>
    <property type="project" value="UniProtKB-KW"/>
</dbReference>
<dbReference type="GO" id="GO:0006355">
    <property type="term" value="P:regulation of DNA-templated transcription"/>
    <property type="evidence" value="ECO:0000318"/>
    <property type="project" value="GO_Central"/>
</dbReference>
<dbReference type="CDD" id="cd19172">
    <property type="entry name" value="SET_SETD2"/>
    <property type="match status" value="1"/>
</dbReference>
<dbReference type="FunFam" id="1.10.1740.100:FF:000002">
    <property type="entry name" value="Histone-lysine N-methyltransferase"/>
    <property type="match status" value="1"/>
</dbReference>
<dbReference type="Gene3D" id="2.170.270.10">
    <property type="entry name" value="SET domain"/>
    <property type="match status" value="1"/>
</dbReference>
<dbReference type="Gene3D" id="1.10.1740.100">
    <property type="entry name" value="Set2, Rpb1 interacting domain"/>
    <property type="match status" value="1"/>
</dbReference>
<dbReference type="InterPro" id="IPR006560">
    <property type="entry name" value="AWS_dom"/>
</dbReference>
<dbReference type="InterPro" id="IPR003616">
    <property type="entry name" value="Post-SET_dom"/>
</dbReference>
<dbReference type="InterPro" id="IPR025788">
    <property type="entry name" value="Set2_fungi"/>
</dbReference>
<dbReference type="InterPro" id="IPR050777">
    <property type="entry name" value="SET2_Histone-Lys_MeTrsfase"/>
</dbReference>
<dbReference type="InterPro" id="IPR001214">
    <property type="entry name" value="SET_dom"/>
</dbReference>
<dbReference type="InterPro" id="IPR046341">
    <property type="entry name" value="SET_dom_sf"/>
</dbReference>
<dbReference type="InterPro" id="IPR044437">
    <property type="entry name" value="SETD2/Set2_SET"/>
</dbReference>
<dbReference type="InterPro" id="IPR013257">
    <property type="entry name" value="SRI"/>
</dbReference>
<dbReference type="InterPro" id="IPR038190">
    <property type="entry name" value="SRI_sf"/>
</dbReference>
<dbReference type="PANTHER" id="PTHR22884">
    <property type="entry name" value="SET DOMAIN PROTEINS"/>
    <property type="match status" value="1"/>
</dbReference>
<dbReference type="Pfam" id="PF17907">
    <property type="entry name" value="AWS"/>
    <property type="match status" value="1"/>
</dbReference>
<dbReference type="Pfam" id="PF00856">
    <property type="entry name" value="SET"/>
    <property type="match status" value="1"/>
</dbReference>
<dbReference type="Pfam" id="PF08236">
    <property type="entry name" value="SRI"/>
    <property type="match status" value="1"/>
</dbReference>
<dbReference type="SMART" id="SM00570">
    <property type="entry name" value="AWS"/>
    <property type="match status" value="1"/>
</dbReference>
<dbReference type="SMART" id="SM00508">
    <property type="entry name" value="PostSET"/>
    <property type="match status" value="1"/>
</dbReference>
<dbReference type="SMART" id="SM00317">
    <property type="entry name" value="SET"/>
    <property type="match status" value="1"/>
</dbReference>
<dbReference type="SUPFAM" id="SSF82199">
    <property type="entry name" value="SET domain"/>
    <property type="match status" value="1"/>
</dbReference>
<dbReference type="PROSITE" id="PS51215">
    <property type="entry name" value="AWS"/>
    <property type="match status" value="1"/>
</dbReference>
<dbReference type="PROSITE" id="PS50868">
    <property type="entry name" value="POST_SET"/>
    <property type="match status" value="1"/>
</dbReference>
<dbReference type="PROSITE" id="PS51568">
    <property type="entry name" value="SAM_MT43_SET2_1"/>
    <property type="match status" value="1"/>
</dbReference>
<dbReference type="PROSITE" id="PS50280">
    <property type="entry name" value="SET"/>
    <property type="match status" value="1"/>
</dbReference>
<comment type="function">
    <text evidence="2">Histone methyltransferase that trimethylates histone H3 'Lys-36' forming H3K36me3. Involved in transcription elongation as well as in transcription repression.</text>
</comment>
<comment type="catalytic activity">
    <reaction evidence="2 7">
        <text>L-lysyl(36)-[histone H3] + 3 S-adenosyl-L-methionine = N(6),N(6),N(6)-trimethyl-L-lysyl(36)-[histone H3] + 3 S-adenosyl-L-homocysteine + 3 H(+)</text>
        <dbReference type="Rhea" id="RHEA:60324"/>
        <dbReference type="Rhea" id="RHEA-COMP:9785"/>
        <dbReference type="Rhea" id="RHEA-COMP:15536"/>
        <dbReference type="ChEBI" id="CHEBI:15378"/>
        <dbReference type="ChEBI" id="CHEBI:29969"/>
        <dbReference type="ChEBI" id="CHEBI:57856"/>
        <dbReference type="ChEBI" id="CHEBI:59789"/>
        <dbReference type="ChEBI" id="CHEBI:61961"/>
        <dbReference type="EC" id="2.1.1.359"/>
    </reaction>
</comment>
<comment type="subcellular location">
    <subcellularLocation>
        <location evidence="1">Nucleus</location>
    </subcellularLocation>
    <subcellularLocation>
        <location evidence="1">Chromosome</location>
    </subcellularLocation>
</comment>
<comment type="domain">
    <text evidence="1">The AWS and SET domains are necessary for transcription repression.</text>
</comment>
<comment type="similarity">
    <text evidence="7">Belongs to the class V-like SAM-binding methyltransferase superfamily. Histone-lysine methyltransferase family. SET2 subfamily.</text>
</comment>